<organism>
    <name type="scientific">Shewanella sp. (strain MR-7)</name>
    <dbReference type="NCBI Taxonomy" id="60481"/>
    <lineage>
        <taxon>Bacteria</taxon>
        <taxon>Pseudomonadati</taxon>
        <taxon>Pseudomonadota</taxon>
        <taxon>Gammaproteobacteria</taxon>
        <taxon>Alteromonadales</taxon>
        <taxon>Shewanellaceae</taxon>
        <taxon>Shewanella</taxon>
    </lineage>
</organism>
<accession>Q0HSK2</accession>
<comment type="function">
    <text evidence="1">An accessory protein needed during the final step in the assembly of 30S ribosomal subunit, possibly for assembly of the head region. Essential for efficient processing of 16S rRNA. May be needed both before and after RbfA during the maturation of 16S rRNA. It has affinity for free ribosomal 30S subunits but not for 70S ribosomes.</text>
</comment>
<comment type="subunit">
    <text evidence="1">Binds ribosomal protein uS19.</text>
</comment>
<comment type="subcellular location">
    <subcellularLocation>
        <location evidence="1">Cytoplasm</location>
    </subcellularLocation>
</comment>
<comment type="domain">
    <text evidence="1">The PRC barrel domain binds ribosomal protein uS19.</text>
</comment>
<comment type="similarity">
    <text evidence="1">Belongs to the RimM family.</text>
</comment>
<feature type="chain" id="PRO_0000321761" description="Ribosome maturation factor RimM">
    <location>
        <begin position="1"/>
        <end position="176"/>
    </location>
</feature>
<feature type="domain" description="PRC barrel" evidence="1">
    <location>
        <begin position="97"/>
        <end position="176"/>
    </location>
</feature>
<keyword id="KW-0143">Chaperone</keyword>
<keyword id="KW-0963">Cytoplasm</keyword>
<keyword id="KW-0690">Ribosome biogenesis</keyword>
<keyword id="KW-0698">rRNA processing</keyword>
<name>RIMM_SHESR</name>
<dbReference type="EMBL" id="CP000444">
    <property type="protein sequence ID" value="ABI43903.1"/>
    <property type="molecule type" value="Genomic_DNA"/>
</dbReference>
<dbReference type="SMR" id="Q0HSK2"/>
<dbReference type="KEGG" id="shm:Shewmr7_2919"/>
<dbReference type="HOGENOM" id="CLU_077636_1_0_6"/>
<dbReference type="GO" id="GO:0005737">
    <property type="term" value="C:cytoplasm"/>
    <property type="evidence" value="ECO:0007669"/>
    <property type="project" value="UniProtKB-SubCell"/>
</dbReference>
<dbReference type="GO" id="GO:0005840">
    <property type="term" value="C:ribosome"/>
    <property type="evidence" value="ECO:0007669"/>
    <property type="project" value="InterPro"/>
</dbReference>
<dbReference type="GO" id="GO:0043022">
    <property type="term" value="F:ribosome binding"/>
    <property type="evidence" value="ECO:0007669"/>
    <property type="project" value="InterPro"/>
</dbReference>
<dbReference type="GO" id="GO:0042274">
    <property type="term" value="P:ribosomal small subunit biogenesis"/>
    <property type="evidence" value="ECO:0007669"/>
    <property type="project" value="UniProtKB-UniRule"/>
</dbReference>
<dbReference type="GO" id="GO:0006364">
    <property type="term" value="P:rRNA processing"/>
    <property type="evidence" value="ECO:0007669"/>
    <property type="project" value="UniProtKB-UniRule"/>
</dbReference>
<dbReference type="Gene3D" id="2.30.30.240">
    <property type="entry name" value="PRC-barrel domain"/>
    <property type="match status" value="1"/>
</dbReference>
<dbReference type="Gene3D" id="2.40.30.60">
    <property type="entry name" value="RimM"/>
    <property type="match status" value="1"/>
</dbReference>
<dbReference type="HAMAP" id="MF_00014">
    <property type="entry name" value="Ribosome_mat_RimM"/>
    <property type="match status" value="1"/>
</dbReference>
<dbReference type="InterPro" id="IPR027275">
    <property type="entry name" value="PRC-brl_dom"/>
</dbReference>
<dbReference type="InterPro" id="IPR011033">
    <property type="entry name" value="PRC_barrel-like_sf"/>
</dbReference>
<dbReference type="InterPro" id="IPR011961">
    <property type="entry name" value="RimM"/>
</dbReference>
<dbReference type="InterPro" id="IPR002676">
    <property type="entry name" value="RimM_N"/>
</dbReference>
<dbReference type="InterPro" id="IPR036976">
    <property type="entry name" value="RimM_N_sf"/>
</dbReference>
<dbReference type="InterPro" id="IPR009000">
    <property type="entry name" value="Transl_B-barrel_sf"/>
</dbReference>
<dbReference type="NCBIfam" id="TIGR02273">
    <property type="entry name" value="16S_RimM"/>
    <property type="match status" value="1"/>
</dbReference>
<dbReference type="PANTHER" id="PTHR33692">
    <property type="entry name" value="RIBOSOME MATURATION FACTOR RIMM"/>
    <property type="match status" value="1"/>
</dbReference>
<dbReference type="PANTHER" id="PTHR33692:SF1">
    <property type="entry name" value="RIBOSOME MATURATION FACTOR RIMM"/>
    <property type="match status" value="1"/>
</dbReference>
<dbReference type="Pfam" id="PF05239">
    <property type="entry name" value="PRC"/>
    <property type="match status" value="1"/>
</dbReference>
<dbReference type="Pfam" id="PF01782">
    <property type="entry name" value="RimM"/>
    <property type="match status" value="1"/>
</dbReference>
<dbReference type="SUPFAM" id="SSF50346">
    <property type="entry name" value="PRC-barrel domain"/>
    <property type="match status" value="1"/>
</dbReference>
<dbReference type="SUPFAM" id="SSF50447">
    <property type="entry name" value="Translation proteins"/>
    <property type="match status" value="1"/>
</dbReference>
<protein>
    <recommendedName>
        <fullName evidence="1">Ribosome maturation factor RimM</fullName>
    </recommendedName>
</protein>
<sequence>MSSNQQPVVLGKLGSCHGIKGWLKITAYTDSVEGIFDYSPWLIKENGEWREVKVIQWRYQGKAVVAELEGVTTRERAQMLTNCEIGILPEQMNALPEDEFYWRDLIGCEVINTNGYNMGVVDQIVETGSNDVLLVKANAKDSFGKVERMLPFVPGQFILKVDIQGKQILVDWDPDF</sequence>
<gene>
    <name evidence="1" type="primary">rimM</name>
    <name type="ordered locus">Shewmr7_2919</name>
</gene>
<proteinExistence type="inferred from homology"/>
<evidence type="ECO:0000255" key="1">
    <source>
        <dbReference type="HAMAP-Rule" id="MF_00014"/>
    </source>
</evidence>
<reference key="1">
    <citation type="submission" date="2006-08" db="EMBL/GenBank/DDBJ databases">
        <title>Complete sequence of chromosome 1 of Shewanella sp. MR-7.</title>
        <authorList>
            <person name="Copeland A."/>
            <person name="Lucas S."/>
            <person name="Lapidus A."/>
            <person name="Barry K."/>
            <person name="Detter J.C."/>
            <person name="Glavina del Rio T."/>
            <person name="Hammon N."/>
            <person name="Israni S."/>
            <person name="Dalin E."/>
            <person name="Tice H."/>
            <person name="Pitluck S."/>
            <person name="Kiss H."/>
            <person name="Brettin T."/>
            <person name="Bruce D."/>
            <person name="Han C."/>
            <person name="Tapia R."/>
            <person name="Gilna P."/>
            <person name="Schmutz J."/>
            <person name="Larimer F."/>
            <person name="Land M."/>
            <person name="Hauser L."/>
            <person name="Kyrpides N."/>
            <person name="Mikhailova N."/>
            <person name="Nealson K."/>
            <person name="Konstantinidis K."/>
            <person name="Klappenbach J."/>
            <person name="Tiedje J."/>
            <person name="Richardson P."/>
        </authorList>
    </citation>
    <scope>NUCLEOTIDE SEQUENCE [LARGE SCALE GENOMIC DNA]</scope>
    <source>
        <strain>MR-7</strain>
    </source>
</reference>